<sequence>MRLSRFFMPILKENPKEAEIVSHRLMLRTGMIRQQSAGIYTWLPLGKRVLDKVNAVIREEQNRSGAIELLMPTLQSAELWQESGRYDAYGKEMLRIKDRQDRPMLYGPTNEEMITDIFRSYVKSYRNLPLNLYHIQLKFRDEIRPRFGTMRSREFLMKDAYSFDLDRAGAEHAYKRMFAAYLRTFDRLGLRAIPMRADTGPIGGNLSHEFIILADTGESEVFCHKDFLGFDIPGEDTNFDDVASMNAIFEKWTSRYAATSEMHEEAAFDAIPEGERLSARGIEVGHIFYFGTKYSEAMGAKVLGPDGKEHTVHMGSYGIGPTRLVPAIIEASHDDNGIIWPKGIAPFDIVVINMKTGDDACDTACGRLYSDLGKAGFDVLLDDTDERAGGKFATADIIGVPVQVIVGPRSIANGEVEVKDRKTGARETMTVEAAINKLVAAR</sequence>
<proteinExistence type="inferred from homology"/>
<feature type="chain" id="PRO_1000069187" description="Proline--tRNA ligase">
    <location>
        <begin position="1"/>
        <end position="442"/>
    </location>
</feature>
<protein>
    <recommendedName>
        <fullName evidence="1">Proline--tRNA ligase</fullName>
        <ecNumber evidence="1">6.1.1.15</ecNumber>
    </recommendedName>
    <alternativeName>
        <fullName evidence="1">Prolyl-tRNA synthetase</fullName>
        <shortName evidence="1">ProRS</shortName>
    </alternativeName>
</protein>
<keyword id="KW-0030">Aminoacyl-tRNA synthetase</keyword>
<keyword id="KW-0067">ATP-binding</keyword>
<keyword id="KW-0963">Cytoplasm</keyword>
<keyword id="KW-0436">Ligase</keyword>
<keyword id="KW-0547">Nucleotide-binding</keyword>
<keyword id="KW-0648">Protein biosynthesis</keyword>
<dbReference type="EC" id="6.1.1.15" evidence="1"/>
<dbReference type="EMBL" id="CP000738">
    <property type="protein sequence ID" value="ABR59773.1"/>
    <property type="molecule type" value="Genomic_DNA"/>
</dbReference>
<dbReference type="RefSeq" id="WP_011975110.1">
    <property type="nucleotide sequence ID" value="NC_009636.1"/>
</dbReference>
<dbReference type="RefSeq" id="YP_001326608.1">
    <property type="nucleotide sequence ID" value="NC_009636.1"/>
</dbReference>
<dbReference type="SMR" id="A6U7Z3"/>
<dbReference type="STRING" id="366394.Smed_0918"/>
<dbReference type="GeneID" id="61612247"/>
<dbReference type="KEGG" id="smd:Smed_0918"/>
<dbReference type="PATRIC" id="fig|366394.8.peg.4033"/>
<dbReference type="eggNOG" id="COG0442">
    <property type="taxonomic scope" value="Bacteria"/>
</dbReference>
<dbReference type="HOGENOM" id="CLU_016739_4_2_5"/>
<dbReference type="OrthoDB" id="9809052at2"/>
<dbReference type="Proteomes" id="UP000001108">
    <property type="component" value="Chromosome"/>
</dbReference>
<dbReference type="GO" id="GO:0005829">
    <property type="term" value="C:cytosol"/>
    <property type="evidence" value="ECO:0007669"/>
    <property type="project" value="TreeGrafter"/>
</dbReference>
<dbReference type="GO" id="GO:0005524">
    <property type="term" value="F:ATP binding"/>
    <property type="evidence" value="ECO:0007669"/>
    <property type="project" value="UniProtKB-UniRule"/>
</dbReference>
<dbReference type="GO" id="GO:0004827">
    <property type="term" value="F:proline-tRNA ligase activity"/>
    <property type="evidence" value="ECO:0007669"/>
    <property type="project" value="UniProtKB-UniRule"/>
</dbReference>
<dbReference type="GO" id="GO:0006433">
    <property type="term" value="P:prolyl-tRNA aminoacylation"/>
    <property type="evidence" value="ECO:0007669"/>
    <property type="project" value="UniProtKB-UniRule"/>
</dbReference>
<dbReference type="CDD" id="cd00861">
    <property type="entry name" value="ProRS_anticodon_short"/>
    <property type="match status" value="1"/>
</dbReference>
<dbReference type="CDD" id="cd00779">
    <property type="entry name" value="ProRS_core_prok"/>
    <property type="match status" value="1"/>
</dbReference>
<dbReference type="FunFam" id="3.30.930.10:FF:000042">
    <property type="entry name" value="probable proline--tRNA ligase, mitochondrial"/>
    <property type="match status" value="1"/>
</dbReference>
<dbReference type="FunFam" id="3.40.50.800:FF:000032">
    <property type="entry name" value="Proline--tRNA ligase"/>
    <property type="match status" value="1"/>
</dbReference>
<dbReference type="Gene3D" id="3.40.50.800">
    <property type="entry name" value="Anticodon-binding domain"/>
    <property type="match status" value="1"/>
</dbReference>
<dbReference type="Gene3D" id="3.30.930.10">
    <property type="entry name" value="Bira Bifunctional Protein, Domain 2"/>
    <property type="match status" value="1"/>
</dbReference>
<dbReference type="HAMAP" id="MF_01570">
    <property type="entry name" value="Pro_tRNA_synth_type2"/>
    <property type="match status" value="1"/>
</dbReference>
<dbReference type="InterPro" id="IPR002314">
    <property type="entry name" value="aa-tRNA-synt_IIb"/>
</dbReference>
<dbReference type="InterPro" id="IPR006195">
    <property type="entry name" value="aa-tRNA-synth_II"/>
</dbReference>
<dbReference type="InterPro" id="IPR045864">
    <property type="entry name" value="aa-tRNA-synth_II/BPL/LPL"/>
</dbReference>
<dbReference type="InterPro" id="IPR004154">
    <property type="entry name" value="Anticodon-bd"/>
</dbReference>
<dbReference type="InterPro" id="IPR036621">
    <property type="entry name" value="Anticodon-bd_dom_sf"/>
</dbReference>
<dbReference type="InterPro" id="IPR002316">
    <property type="entry name" value="Pro-tRNA-ligase_IIa"/>
</dbReference>
<dbReference type="InterPro" id="IPR004500">
    <property type="entry name" value="Pro-tRNA-synth_IIa_bac-type"/>
</dbReference>
<dbReference type="InterPro" id="IPR050062">
    <property type="entry name" value="Pro-tRNA_synthetase"/>
</dbReference>
<dbReference type="InterPro" id="IPR023716">
    <property type="entry name" value="Prolyl-tRNA_ligase_IIa_type2"/>
</dbReference>
<dbReference type="InterPro" id="IPR044140">
    <property type="entry name" value="ProRS_anticodon_short"/>
</dbReference>
<dbReference type="InterPro" id="IPR033730">
    <property type="entry name" value="ProRS_core_prok"/>
</dbReference>
<dbReference type="NCBIfam" id="NF008979">
    <property type="entry name" value="PRK12325.1"/>
    <property type="match status" value="1"/>
</dbReference>
<dbReference type="NCBIfam" id="TIGR00409">
    <property type="entry name" value="proS_fam_II"/>
    <property type="match status" value="1"/>
</dbReference>
<dbReference type="PANTHER" id="PTHR42753">
    <property type="entry name" value="MITOCHONDRIAL RIBOSOME PROTEIN L39/PROLYL-TRNA LIGASE FAMILY MEMBER"/>
    <property type="match status" value="1"/>
</dbReference>
<dbReference type="PANTHER" id="PTHR42753:SF2">
    <property type="entry name" value="PROLINE--TRNA LIGASE"/>
    <property type="match status" value="1"/>
</dbReference>
<dbReference type="Pfam" id="PF03129">
    <property type="entry name" value="HGTP_anticodon"/>
    <property type="match status" value="1"/>
</dbReference>
<dbReference type="Pfam" id="PF00587">
    <property type="entry name" value="tRNA-synt_2b"/>
    <property type="match status" value="1"/>
</dbReference>
<dbReference type="PRINTS" id="PR01046">
    <property type="entry name" value="TRNASYNTHPRO"/>
</dbReference>
<dbReference type="SUPFAM" id="SSF52954">
    <property type="entry name" value="Class II aaRS ABD-related"/>
    <property type="match status" value="1"/>
</dbReference>
<dbReference type="SUPFAM" id="SSF55681">
    <property type="entry name" value="Class II aaRS and biotin synthetases"/>
    <property type="match status" value="1"/>
</dbReference>
<dbReference type="PROSITE" id="PS50862">
    <property type="entry name" value="AA_TRNA_LIGASE_II"/>
    <property type="match status" value="1"/>
</dbReference>
<name>SYP_SINMW</name>
<comment type="function">
    <text evidence="1">Catalyzes the attachment of proline to tRNA(Pro) in a two-step reaction: proline is first activated by ATP to form Pro-AMP and then transferred to the acceptor end of tRNA(Pro).</text>
</comment>
<comment type="catalytic activity">
    <reaction evidence="1">
        <text>tRNA(Pro) + L-proline + ATP = L-prolyl-tRNA(Pro) + AMP + diphosphate</text>
        <dbReference type="Rhea" id="RHEA:14305"/>
        <dbReference type="Rhea" id="RHEA-COMP:9700"/>
        <dbReference type="Rhea" id="RHEA-COMP:9702"/>
        <dbReference type="ChEBI" id="CHEBI:30616"/>
        <dbReference type="ChEBI" id="CHEBI:33019"/>
        <dbReference type="ChEBI" id="CHEBI:60039"/>
        <dbReference type="ChEBI" id="CHEBI:78442"/>
        <dbReference type="ChEBI" id="CHEBI:78532"/>
        <dbReference type="ChEBI" id="CHEBI:456215"/>
        <dbReference type="EC" id="6.1.1.15"/>
    </reaction>
</comment>
<comment type="subunit">
    <text evidence="1">Homodimer.</text>
</comment>
<comment type="subcellular location">
    <subcellularLocation>
        <location evidence="1">Cytoplasm</location>
    </subcellularLocation>
</comment>
<comment type="similarity">
    <text evidence="1">Belongs to the class-II aminoacyl-tRNA synthetase family. ProS type 2 subfamily.</text>
</comment>
<gene>
    <name evidence="1" type="primary">proS</name>
    <name type="ordered locus">Smed_0918</name>
</gene>
<organism>
    <name type="scientific">Sinorhizobium medicae (strain WSM419)</name>
    <name type="common">Ensifer medicae</name>
    <dbReference type="NCBI Taxonomy" id="366394"/>
    <lineage>
        <taxon>Bacteria</taxon>
        <taxon>Pseudomonadati</taxon>
        <taxon>Pseudomonadota</taxon>
        <taxon>Alphaproteobacteria</taxon>
        <taxon>Hyphomicrobiales</taxon>
        <taxon>Rhizobiaceae</taxon>
        <taxon>Sinorhizobium/Ensifer group</taxon>
        <taxon>Sinorhizobium</taxon>
    </lineage>
</organism>
<evidence type="ECO:0000255" key="1">
    <source>
        <dbReference type="HAMAP-Rule" id="MF_01570"/>
    </source>
</evidence>
<accession>A6U7Z3</accession>
<reference key="1">
    <citation type="submission" date="2007-06" db="EMBL/GenBank/DDBJ databases">
        <title>Complete sequence of Sinorhizobium medicae WSM419 chromosome.</title>
        <authorList>
            <consortium name="US DOE Joint Genome Institute"/>
            <person name="Copeland A."/>
            <person name="Lucas S."/>
            <person name="Lapidus A."/>
            <person name="Barry K."/>
            <person name="Glavina del Rio T."/>
            <person name="Dalin E."/>
            <person name="Tice H."/>
            <person name="Pitluck S."/>
            <person name="Chain P."/>
            <person name="Malfatti S."/>
            <person name="Shin M."/>
            <person name="Vergez L."/>
            <person name="Schmutz J."/>
            <person name="Larimer F."/>
            <person name="Land M."/>
            <person name="Hauser L."/>
            <person name="Kyrpides N."/>
            <person name="Mikhailova N."/>
            <person name="Reeve W.G."/>
            <person name="Richardson P."/>
        </authorList>
    </citation>
    <scope>NUCLEOTIDE SEQUENCE [LARGE SCALE GENOMIC DNA]</scope>
    <source>
        <strain>WSM419</strain>
    </source>
</reference>